<feature type="chain" id="PRO_0000230132" description="Imidazole glycerol phosphate synthase subunit HisF">
    <location>
        <begin position="1"/>
        <end position="256"/>
    </location>
</feature>
<feature type="active site" evidence="1">
    <location>
        <position position="11"/>
    </location>
</feature>
<feature type="active site" evidence="1">
    <location>
        <position position="130"/>
    </location>
</feature>
<sequence length="256" mass="27769">MVALRLIPCLDVAHGRVVKGVNFVNLRDSGDPVELACRYSDEGADELVFLDIRASVENRNTLVDLVSRTAKSVKIPFTVGGGIDSVSSINDLLRAGADKVSLNSSAVRNPDLISKSSREFGNQCIVIAIDAKRKVNKTDEWEVYVKGGRENTGIDVLSWAKKVEELGAGEILLTSMDGDGTQNGYDLHLTESVANIVNIPVIASGGAGCLEDIYDVFNEGRASAALLASLLHDKKLSLREIKTFLLERKLPIRPYE</sequence>
<comment type="function">
    <text evidence="1">IGPS catalyzes the conversion of PRFAR and glutamine to IGP, AICAR and glutamate. The HisF subunit catalyzes the cyclization activity that produces IGP and AICAR from PRFAR using the ammonia provided by the HisH subunit.</text>
</comment>
<comment type="catalytic activity">
    <reaction evidence="1">
        <text>5-[(5-phospho-1-deoxy-D-ribulos-1-ylimino)methylamino]-1-(5-phospho-beta-D-ribosyl)imidazole-4-carboxamide + L-glutamine = D-erythro-1-(imidazol-4-yl)glycerol 3-phosphate + 5-amino-1-(5-phospho-beta-D-ribosyl)imidazole-4-carboxamide + L-glutamate + H(+)</text>
        <dbReference type="Rhea" id="RHEA:24793"/>
        <dbReference type="ChEBI" id="CHEBI:15378"/>
        <dbReference type="ChEBI" id="CHEBI:29985"/>
        <dbReference type="ChEBI" id="CHEBI:58278"/>
        <dbReference type="ChEBI" id="CHEBI:58359"/>
        <dbReference type="ChEBI" id="CHEBI:58475"/>
        <dbReference type="ChEBI" id="CHEBI:58525"/>
        <dbReference type="EC" id="4.3.2.10"/>
    </reaction>
</comment>
<comment type="pathway">
    <text evidence="1">Amino-acid biosynthesis; L-histidine biosynthesis; L-histidine from 5-phospho-alpha-D-ribose 1-diphosphate: step 5/9.</text>
</comment>
<comment type="subunit">
    <text evidence="1">Heterodimer of HisH and HisF.</text>
</comment>
<comment type="subcellular location">
    <subcellularLocation>
        <location evidence="1">Cytoplasm</location>
    </subcellularLocation>
</comment>
<comment type="similarity">
    <text evidence="1">Belongs to the HisA/HisF family.</text>
</comment>
<dbReference type="EC" id="4.3.2.10" evidence="1"/>
<dbReference type="EMBL" id="CP000111">
    <property type="protein sequence ID" value="ABB49490.1"/>
    <property type="molecule type" value="Genomic_DNA"/>
</dbReference>
<dbReference type="RefSeq" id="WP_011375989.1">
    <property type="nucleotide sequence ID" value="NC_007577.1"/>
</dbReference>
<dbReference type="SMR" id="Q31CA5"/>
<dbReference type="STRING" id="74546.PMT9312_0429"/>
<dbReference type="KEGG" id="pmi:PMT9312_0429"/>
<dbReference type="eggNOG" id="COG0107">
    <property type="taxonomic scope" value="Bacteria"/>
</dbReference>
<dbReference type="HOGENOM" id="CLU_048577_4_0_3"/>
<dbReference type="OrthoDB" id="9781903at2"/>
<dbReference type="UniPathway" id="UPA00031">
    <property type="reaction ID" value="UER00010"/>
</dbReference>
<dbReference type="Proteomes" id="UP000002715">
    <property type="component" value="Chromosome"/>
</dbReference>
<dbReference type="GO" id="GO:0005737">
    <property type="term" value="C:cytoplasm"/>
    <property type="evidence" value="ECO:0007669"/>
    <property type="project" value="UniProtKB-SubCell"/>
</dbReference>
<dbReference type="GO" id="GO:0000107">
    <property type="term" value="F:imidazoleglycerol-phosphate synthase activity"/>
    <property type="evidence" value="ECO:0007669"/>
    <property type="project" value="UniProtKB-UniRule"/>
</dbReference>
<dbReference type="GO" id="GO:0016829">
    <property type="term" value="F:lyase activity"/>
    <property type="evidence" value="ECO:0007669"/>
    <property type="project" value="UniProtKB-KW"/>
</dbReference>
<dbReference type="GO" id="GO:0000105">
    <property type="term" value="P:L-histidine biosynthetic process"/>
    <property type="evidence" value="ECO:0007669"/>
    <property type="project" value="UniProtKB-UniRule"/>
</dbReference>
<dbReference type="CDD" id="cd04731">
    <property type="entry name" value="HisF"/>
    <property type="match status" value="1"/>
</dbReference>
<dbReference type="FunFam" id="3.20.20.70:FF:000006">
    <property type="entry name" value="Imidazole glycerol phosphate synthase subunit HisF"/>
    <property type="match status" value="1"/>
</dbReference>
<dbReference type="Gene3D" id="3.20.20.70">
    <property type="entry name" value="Aldolase class I"/>
    <property type="match status" value="1"/>
</dbReference>
<dbReference type="HAMAP" id="MF_01013">
    <property type="entry name" value="HisF"/>
    <property type="match status" value="1"/>
</dbReference>
<dbReference type="InterPro" id="IPR013785">
    <property type="entry name" value="Aldolase_TIM"/>
</dbReference>
<dbReference type="InterPro" id="IPR006062">
    <property type="entry name" value="His_biosynth"/>
</dbReference>
<dbReference type="InterPro" id="IPR004651">
    <property type="entry name" value="HisF"/>
</dbReference>
<dbReference type="InterPro" id="IPR050064">
    <property type="entry name" value="IGPS_HisA/HisF"/>
</dbReference>
<dbReference type="InterPro" id="IPR011060">
    <property type="entry name" value="RibuloseP-bd_barrel"/>
</dbReference>
<dbReference type="NCBIfam" id="TIGR00735">
    <property type="entry name" value="hisF"/>
    <property type="match status" value="1"/>
</dbReference>
<dbReference type="PANTHER" id="PTHR21235:SF2">
    <property type="entry name" value="IMIDAZOLE GLYCEROL PHOSPHATE SYNTHASE HISHF"/>
    <property type="match status" value="1"/>
</dbReference>
<dbReference type="PANTHER" id="PTHR21235">
    <property type="entry name" value="IMIDAZOLE GLYCEROL PHOSPHATE SYNTHASE SUBUNIT HISF/H IGP SYNTHASE SUBUNIT HISF/H"/>
    <property type="match status" value="1"/>
</dbReference>
<dbReference type="Pfam" id="PF00977">
    <property type="entry name" value="His_biosynth"/>
    <property type="match status" value="1"/>
</dbReference>
<dbReference type="SUPFAM" id="SSF51366">
    <property type="entry name" value="Ribulose-phoshate binding barrel"/>
    <property type="match status" value="1"/>
</dbReference>
<name>HIS6_PROM9</name>
<keyword id="KW-0028">Amino-acid biosynthesis</keyword>
<keyword id="KW-0963">Cytoplasm</keyword>
<keyword id="KW-0368">Histidine biosynthesis</keyword>
<keyword id="KW-0456">Lyase</keyword>
<reference key="1">
    <citation type="journal article" date="2006" name="Science">
        <title>Genomic islands and the ecology and evolution of Prochlorococcus.</title>
        <authorList>
            <person name="Coleman M.L."/>
            <person name="Sullivan M.B."/>
            <person name="Martiny A.C."/>
            <person name="Steglich C."/>
            <person name="Barry K."/>
            <person name="Delong E.F."/>
            <person name="Chisholm S.W."/>
        </authorList>
    </citation>
    <scope>NUCLEOTIDE SEQUENCE [LARGE SCALE GENOMIC DNA]</scope>
    <source>
        <strain>MIT 9312</strain>
    </source>
</reference>
<gene>
    <name evidence="1" type="primary">hisF</name>
    <name type="ordered locus">PMT9312_0429</name>
</gene>
<evidence type="ECO:0000255" key="1">
    <source>
        <dbReference type="HAMAP-Rule" id="MF_01013"/>
    </source>
</evidence>
<protein>
    <recommendedName>
        <fullName evidence="1">Imidazole glycerol phosphate synthase subunit HisF</fullName>
        <ecNumber evidence="1">4.3.2.10</ecNumber>
    </recommendedName>
    <alternativeName>
        <fullName evidence="1">IGP synthase cyclase subunit</fullName>
    </alternativeName>
    <alternativeName>
        <fullName evidence="1">IGP synthase subunit HisF</fullName>
    </alternativeName>
    <alternativeName>
        <fullName evidence="1">ImGP synthase subunit HisF</fullName>
        <shortName evidence="1">IGPS subunit HisF</shortName>
    </alternativeName>
</protein>
<accession>Q31CA5</accession>
<organism>
    <name type="scientific">Prochlorococcus marinus (strain MIT 9312)</name>
    <dbReference type="NCBI Taxonomy" id="74546"/>
    <lineage>
        <taxon>Bacteria</taxon>
        <taxon>Bacillati</taxon>
        <taxon>Cyanobacteriota</taxon>
        <taxon>Cyanophyceae</taxon>
        <taxon>Synechococcales</taxon>
        <taxon>Prochlorococcaceae</taxon>
        <taxon>Prochlorococcus</taxon>
    </lineage>
</organism>
<proteinExistence type="inferred from homology"/>